<comment type="cofactor">
    <cofactor evidence="1">
        <name>thiamine diphosphate</name>
        <dbReference type="ChEBI" id="CHEBI:58937"/>
    </cofactor>
</comment>
<comment type="similarity">
    <text evidence="1">Belongs to the XFP family.</text>
</comment>
<feature type="chain" id="PRO_0000193882" description="Probable phosphoketolase">
    <location>
        <begin position="1"/>
        <end position="790"/>
    </location>
</feature>
<dbReference type="EC" id="4.1.2.-" evidence="1"/>
<dbReference type="EMBL" id="AL954747">
    <property type="protein sequence ID" value="CAD86046.1"/>
    <property type="molecule type" value="Genomic_DNA"/>
</dbReference>
<dbReference type="RefSeq" id="WP_011112635.1">
    <property type="nucleotide sequence ID" value="NC_004757.1"/>
</dbReference>
<dbReference type="SMR" id="Q82T07"/>
<dbReference type="STRING" id="228410.NE2135"/>
<dbReference type="DNASU" id="1083097"/>
<dbReference type="GeneID" id="87105271"/>
<dbReference type="KEGG" id="neu:NE2135"/>
<dbReference type="eggNOG" id="COG3957">
    <property type="taxonomic scope" value="Bacteria"/>
</dbReference>
<dbReference type="HOGENOM" id="CLU_013954_2_0_4"/>
<dbReference type="OrthoDB" id="9768449at2"/>
<dbReference type="PhylomeDB" id="Q82T07"/>
<dbReference type="Proteomes" id="UP000001416">
    <property type="component" value="Chromosome"/>
</dbReference>
<dbReference type="GO" id="GO:0016832">
    <property type="term" value="F:aldehyde-lyase activity"/>
    <property type="evidence" value="ECO:0007669"/>
    <property type="project" value="UniProtKB-UniRule"/>
</dbReference>
<dbReference type="GO" id="GO:0005975">
    <property type="term" value="P:carbohydrate metabolic process"/>
    <property type="evidence" value="ECO:0007669"/>
    <property type="project" value="InterPro"/>
</dbReference>
<dbReference type="CDD" id="cd02011">
    <property type="entry name" value="TPP_PK"/>
    <property type="match status" value="1"/>
</dbReference>
<dbReference type="FunFam" id="3.40.50.970:FF:000091">
    <property type="entry name" value="Xylulose-5-phosphate/fructose-6-phosphate phosphoketolase"/>
    <property type="match status" value="1"/>
</dbReference>
<dbReference type="Gene3D" id="3.40.50.920">
    <property type="match status" value="1"/>
</dbReference>
<dbReference type="Gene3D" id="3.40.50.970">
    <property type="match status" value="2"/>
</dbReference>
<dbReference type="HAMAP" id="MF_01403">
    <property type="entry name" value="Phosphoketolase"/>
    <property type="match status" value="1"/>
</dbReference>
<dbReference type="InterPro" id="IPR023962">
    <property type="entry name" value="Phosphoketolase"/>
</dbReference>
<dbReference type="InterPro" id="IPR029061">
    <property type="entry name" value="THDP-binding"/>
</dbReference>
<dbReference type="InterPro" id="IPR009014">
    <property type="entry name" value="Transketo_C/PFOR_II"/>
</dbReference>
<dbReference type="InterPro" id="IPR005593">
    <property type="entry name" value="Xul5P/Fru6P_PKetolase"/>
</dbReference>
<dbReference type="InterPro" id="IPR018969">
    <property type="entry name" value="Xul5P/Fru6P_PKetolase_C"/>
</dbReference>
<dbReference type="InterPro" id="IPR019790">
    <property type="entry name" value="Xul5P/Fru6P_PKetolase_CS"/>
</dbReference>
<dbReference type="InterPro" id="IPR018970">
    <property type="entry name" value="Xul5P/Fru6P_PKetolase_N"/>
</dbReference>
<dbReference type="InterPro" id="IPR019789">
    <property type="entry name" value="Xul5P/Fru6P_PKetolase_ThDP_BS"/>
</dbReference>
<dbReference type="NCBIfam" id="NF003616">
    <property type="entry name" value="PRK05261.1-1"/>
    <property type="match status" value="1"/>
</dbReference>
<dbReference type="NCBIfam" id="NF003617">
    <property type="entry name" value="PRK05261.1-2"/>
    <property type="match status" value="1"/>
</dbReference>
<dbReference type="NCBIfam" id="NF003619">
    <property type="entry name" value="PRK05261.1-4"/>
    <property type="match status" value="1"/>
</dbReference>
<dbReference type="NCBIfam" id="NF003621">
    <property type="entry name" value="PRK05261.1-6"/>
    <property type="match status" value="1"/>
</dbReference>
<dbReference type="PANTHER" id="PTHR31273">
    <property type="entry name" value="PHOSPHOKETOLASE-RELATED"/>
    <property type="match status" value="1"/>
</dbReference>
<dbReference type="PANTHER" id="PTHR31273:SF0">
    <property type="entry name" value="PHOSPHOKETOLASE-RELATED"/>
    <property type="match status" value="1"/>
</dbReference>
<dbReference type="Pfam" id="PF03894">
    <property type="entry name" value="XFP"/>
    <property type="match status" value="1"/>
</dbReference>
<dbReference type="Pfam" id="PF09363">
    <property type="entry name" value="XFP_C"/>
    <property type="match status" value="1"/>
</dbReference>
<dbReference type="Pfam" id="PF09364">
    <property type="entry name" value="XFP_N"/>
    <property type="match status" value="1"/>
</dbReference>
<dbReference type="PIRSF" id="PIRSF017245">
    <property type="entry name" value="Phosphoketolase"/>
    <property type="match status" value="1"/>
</dbReference>
<dbReference type="SUPFAM" id="SSF52518">
    <property type="entry name" value="Thiamin diphosphate-binding fold (THDP-binding)"/>
    <property type="match status" value="2"/>
</dbReference>
<dbReference type="PROSITE" id="PS60002">
    <property type="entry name" value="PHOSPHOKETOLASE_1"/>
    <property type="match status" value="1"/>
</dbReference>
<dbReference type="PROSITE" id="PS60003">
    <property type="entry name" value="PHOSPHOKETOLASE_2"/>
    <property type="match status" value="1"/>
</dbReference>
<name>PHK_NITEU</name>
<evidence type="ECO:0000255" key="1">
    <source>
        <dbReference type="HAMAP-Rule" id="MF_01403"/>
    </source>
</evidence>
<gene>
    <name type="ordered locus">NE2135</name>
</gene>
<reference key="1">
    <citation type="journal article" date="2003" name="J. Bacteriol.">
        <title>Complete genome sequence of the ammonia-oxidizing bacterium and obligate chemolithoautotroph Nitrosomonas europaea.</title>
        <authorList>
            <person name="Chain P."/>
            <person name="Lamerdin J.E."/>
            <person name="Larimer F.W."/>
            <person name="Regala W."/>
            <person name="Lao V."/>
            <person name="Land M.L."/>
            <person name="Hauser L."/>
            <person name="Hooper A.B."/>
            <person name="Klotz M.G."/>
            <person name="Norton J."/>
            <person name="Sayavedra-Soto L.A."/>
            <person name="Arciero D.M."/>
            <person name="Hommes N.G."/>
            <person name="Whittaker M.M."/>
            <person name="Arp D.J."/>
        </authorList>
    </citation>
    <scope>NUCLEOTIDE SEQUENCE [LARGE SCALE GENOMIC DNA]</scope>
    <source>
        <strain>ATCC 19718 / CIP 103999 / KCTC 2705 / NBRC 14298</strain>
    </source>
</reference>
<proteinExistence type="inferred from homology"/>
<protein>
    <recommendedName>
        <fullName evidence="1">Probable phosphoketolase</fullName>
        <ecNumber evidence="1">4.1.2.-</ecNumber>
    </recommendedName>
</protein>
<organism>
    <name type="scientific">Nitrosomonas europaea (strain ATCC 19718 / CIP 103999 / KCTC 2705 / NBRC 14298)</name>
    <dbReference type="NCBI Taxonomy" id="228410"/>
    <lineage>
        <taxon>Bacteria</taxon>
        <taxon>Pseudomonadati</taxon>
        <taxon>Pseudomonadota</taxon>
        <taxon>Betaproteobacteria</taxon>
        <taxon>Nitrosomonadales</taxon>
        <taxon>Nitrosomonadaceae</taxon>
        <taxon>Nitrosomonas</taxon>
    </lineage>
</organism>
<accession>Q82T07</accession>
<sequence length="790" mass="89642">MTQLPQPLTPDELQKIDAYWRAANYLSVGQIYLLDNPLLQTPLTLQHIKPRLLGHWGTTPGLNFIYAHLNRIIRRDDLNMIYIAGPGHGGPALVANTYLEGTYSEHYPDISQDIQGMKHLFRQFSFPGGIGSHATPEIPGSIHEGGELGYALSHAFGAVFDNPDLIAACVVGDGEAETGPLATAWHSNKFLNPVHDGAVLPILHLNGYKIANPTILARISREELDQLFQGYGYQPYIVEGEDPLTMHQLMAGTLDQVLAEIRSIQTRARLDGVTQYPRWPMIILRTPKGWTGPATVDGLKTEGSWRSHQVPLSELAKKPEHIQQLEAWLRSYRPEELFDTQGRLVEPLQTLAPLGNRRMGANPHANGGSLMKQLRMPDFRKYAVEIVQPGQIEAESTRIMGSFLRDIMCLNLKTCNFRVFGPDETASNRLGSLYDVTPKTWLAETLPEDEHLAPDGRVMEILSEHTCQGWLEGYLLTGRHGLFSCYEAFIHIVDSMFNQHAKWLKVSKEIPWRRPIASLNYLLTSHVWRQDHNGFSHQDPGFIDHVINKKADTIRIYLPPDANCLLYITDKCLRSRNFVNVIVAGKQPQLQWLDMDAAIKHCTAGIGIWGWASNDQAGEPDVVIACAGDVPTIEVLAAVSILREHLPDLRIRVINVVDLMTLQHDREHPQGLSDREFDTLFTTDKPIIFAYHGYPWLIHRLTYRRTNHANLHVRGYKEEGTTTTPFDMTVLNDMDRFHLVDDVIDRVPHLGYKAAYLRQIMRDKLVEHREYINRHGEDMPEIRDWKWTAP</sequence>
<keyword id="KW-0456">Lyase</keyword>
<keyword id="KW-1185">Reference proteome</keyword>
<keyword id="KW-0786">Thiamine pyrophosphate</keyword>